<gene>
    <name type="ordered locus">MJ0904</name>
</gene>
<dbReference type="EMBL" id="L77117">
    <property type="protein sequence ID" value="AAB98914.1"/>
    <property type="molecule type" value="Genomic_DNA"/>
</dbReference>
<dbReference type="PIR" id="H64412">
    <property type="entry name" value="H64412"/>
</dbReference>
<dbReference type="RefSeq" id="WP_010870418.1">
    <property type="nucleotide sequence ID" value="NC_000909.1"/>
</dbReference>
<dbReference type="STRING" id="243232.MJ_0904"/>
<dbReference type="PaxDb" id="243232-MJ_0904"/>
<dbReference type="EnsemblBacteria" id="AAB98914">
    <property type="protein sequence ID" value="AAB98914"/>
    <property type="gene ID" value="MJ_0904"/>
</dbReference>
<dbReference type="GeneID" id="1451793"/>
<dbReference type="KEGG" id="mja:MJ_0904"/>
<dbReference type="eggNOG" id="arCOG05057">
    <property type="taxonomic scope" value="Archaea"/>
</dbReference>
<dbReference type="HOGENOM" id="CLU_1393583_0_0_2"/>
<dbReference type="InParanoid" id="Q58314"/>
<dbReference type="OrthoDB" id="65851at2157"/>
<dbReference type="Proteomes" id="UP000000805">
    <property type="component" value="Chromosome"/>
</dbReference>
<dbReference type="GO" id="GO:0016020">
    <property type="term" value="C:membrane"/>
    <property type="evidence" value="ECO:0007669"/>
    <property type="project" value="UniProtKB-SubCell"/>
</dbReference>
<protein>
    <recommendedName>
        <fullName>Uncharacterized protein MJ0904</fullName>
    </recommendedName>
</protein>
<name>Y904_METJA</name>
<comment type="subcellular location">
    <subcellularLocation>
        <location evidence="2">Membrane</location>
        <topology evidence="2">Single-pass membrane protein</topology>
    </subcellularLocation>
</comment>
<organism>
    <name type="scientific">Methanocaldococcus jannaschii (strain ATCC 43067 / DSM 2661 / JAL-1 / JCM 10045 / NBRC 100440)</name>
    <name type="common">Methanococcus jannaschii</name>
    <dbReference type="NCBI Taxonomy" id="243232"/>
    <lineage>
        <taxon>Archaea</taxon>
        <taxon>Methanobacteriati</taxon>
        <taxon>Methanobacteriota</taxon>
        <taxon>Methanomada group</taxon>
        <taxon>Methanococci</taxon>
        <taxon>Methanococcales</taxon>
        <taxon>Methanocaldococcaceae</taxon>
        <taxon>Methanocaldococcus</taxon>
    </lineage>
</organism>
<evidence type="ECO:0000255" key="1"/>
<evidence type="ECO:0000305" key="2"/>
<proteinExistence type="predicted"/>
<sequence length="195" mass="21909">MNIENLAYNSSSDVLKAKIKNDKFPVNLTVQYWVDVSRGSNIYYKSSIFQTEIYPKSEKELIVPLTLGDLESGIYNITLYVRVNNFALFNYQKVPVILKKSISIEINGSKGVMQQKSNKESDEIINETSETHKNMTIDIKNLSNNKDNKSNIEESTAKNVKSNIETKKSADNNSILGKISGFFGSIVSTIFSLFG</sequence>
<feature type="chain" id="PRO_0000107096" description="Uncharacterized protein MJ0904">
    <location>
        <begin position="1"/>
        <end position="195"/>
    </location>
</feature>
<feature type="transmembrane region" description="Helical" evidence="1">
    <location>
        <begin position="175"/>
        <end position="195"/>
    </location>
</feature>
<keyword id="KW-0472">Membrane</keyword>
<keyword id="KW-1185">Reference proteome</keyword>
<keyword id="KW-0812">Transmembrane</keyword>
<keyword id="KW-1133">Transmembrane helix</keyword>
<accession>Q58314</accession>
<reference key="1">
    <citation type="journal article" date="1996" name="Science">
        <title>Complete genome sequence of the methanogenic archaeon, Methanococcus jannaschii.</title>
        <authorList>
            <person name="Bult C.J."/>
            <person name="White O."/>
            <person name="Olsen G.J."/>
            <person name="Zhou L."/>
            <person name="Fleischmann R.D."/>
            <person name="Sutton G.G."/>
            <person name="Blake J.A."/>
            <person name="FitzGerald L.M."/>
            <person name="Clayton R.A."/>
            <person name="Gocayne J.D."/>
            <person name="Kerlavage A.R."/>
            <person name="Dougherty B.A."/>
            <person name="Tomb J.-F."/>
            <person name="Adams M.D."/>
            <person name="Reich C.I."/>
            <person name="Overbeek R."/>
            <person name="Kirkness E.F."/>
            <person name="Weinstock K.G."/>
            <person name="Merrick J.M."/>
            <person name="Glodek A."/>
            <person name="Scott J.L."/>
            <person name="Geoghagen N.S.M."/>
            <person name="Weidman J.F."/>
            <person name="Fuhrmann J.L."/>
            <person name="Nguyen D."/>
            <person name="Utterback T.R."/>
            <person name="Kelley J.M."/>
            <person name="Peterson J.D."/>
            <person name="Sadow P.W."/>
            <person name="Hanna M.C."/>
            <person name="Cotton M.D."/>
            <person name="Roberts K.M."/>
            <person name="Hurst M.A."/>
            <person name="Kaine B.P."/>
            <person name="Borodovsky M."/>
            <person name="Klenk H.-P."/>
            <person name="Fraser C.M."/>
            <person name="Smith H.O."/>
            <person name="Woese C.R."/>
            <person name="Venter J.C."/>
        </authorList>
    </citation>
    <scope>NUCLEOTIDE SEQUENCE [LARGE SCALE GENOMIC DNA]</scope>
    <source>
        <strain>ATCC 43067 / DSM 2661 / JAL-1 / JCM 10045 / NBRC 100440</strain>
    </source>
</reference>